<name>UPP_BURMS</name>
<organism>
    <name type="scientific">Burkholderia mallei (strain SAVP1)</name>
    <dbReference type="NCBI Taxonomy" id="320388"/>
    <lineage>
        <taxon>Bacteria</taxon>
        <taxon>Pseudomonadati</taxon>
        <taxon>Pseudomonadota</taxon>
        <taxon>Betaproteobacteria</taxon>
        <taxon>Burkholderiales</taxon>
        <taxon>Burkholderiaceae</taxon>
        <taxon>Burkholderia</taxon>
        <taxon>pseudomallei group</taxon>
    </lineage>
</organism>
<gene>
    <name evidence="1" type="primary">upp</name>
    <name type="ordered locus">BMASAVP1_A1077</name>
</gene>
<accession>A1V2G4</accession>
<sequence>MKQDSRFPNLFILDHPLIQHKLTHMRDKDTSTRTFRELLREITLLMGYEITRNLPITTKRVETPLVEIDAPVIAGKKLAIVPVLRAGVGMSDGLLELIPSARVGHIGVYRADDHRPVEYLVRLPDLEDRIFILCDPMVATGYSAAHAIDVLKRRGVPGERLMFLALVAAPEGVQVFQDAHPDVKLYVASLDSHLDDHAYIVPGLGDAGDRLFGTKN</sequence>
<protein>
    <recommendedName>
        <fullName evidence="1">Uracil phosphoribosyltransferase</fullName>
        <ecNumber evidence="1">2.4.2.9</ecNumber>
    </recommendedName>
    <alternativeName>
        <fullName evidence="1">UMP pyrophosphorylase</fullName>
    </alternativeName>
    <alternativeName>
        <fullName evidence="1">UPRTase</fullName>
    </alternativeName>
</protein>
<reference key="1">
    <citation type="journal article" date="2010" name="Genome Biol. Evol.">
        <title>Continuing evolution of Burkholderia mallei through genome reduction and large-scale rearrangements.</title>
        <authorList>
            <person name="Losada L."/>
            <person name="Ronning C.M."/>
            <person name="DeShazer D."/>
            <person name="Woods D."/>
            <person name="Fedorova N."/>
            <person name="Kim H.S."/>
            <person name="Shabalina S.A."/>
            <person name="Pearson T.R."/>
            <person name="Brinkac L."/>
            <person name="Tan P."/>
            <person name="Nandi T."/>
            <person name="Crabtree J."/>
            <person name="Badger J."/>
            <person name="Beckstrom-Sternberg S."/>
            <person name="Saqib M."/>
            <person name="Schutzer S.E."/>
            <person name="Keim P."/>
            <person name="Nierman W.C."/>
        </authorList>
    </citation>
    <scope>NUCLEOTIDE SEQUENCE [LARGE SCALE GENOMIC DNA]</scope>
    <source>
        <strain>SAVP1</strain>
    </source>
</reference>
<proteinExistence type="inferred from homology"/>
<dbReference type="EC" id="2.4.2.9" evidence="1"/>
<dbReference type="EMBL" id="CP000526">
    <property type="protein sequence ID" value="ABM51698.1"/>
    <property type="molecule type" value="Genomic_DNA"/>
</dbReference>
<dbReference type="RefSeq" id="WP_004186446.1">
    <property type="nucleotide sequence ID" value="NC_008785.1"/>
</dbReference>
<dbReference type="SMR" id="A1V2G4"/>
<dbReference type="GeneID" id="93059646"/>
<dbReference type="KEGG" id="bmv:BMASAVP1_A1077"/>
<dbReference type="HOGENOM" id="CLU_067096_2_2_4"/>
<dbReference type="UniPathway" id="UPA00574">
    <property type="reaction ID" value="UER00636"/>
</dbReference>
<dbReference type="GO" id="GO:0005525">
    <property type="term" value="F:GTP binding"/>
    <property type="evidence" value="ECO:0007669"/>
    <property type="project" value="UniProtKB-KW"/>
</dbReference>
<dbReference type="GO" id="GO:0000287">
    <property type="term" value="F:magnesium ion binding"/>
    <property type="evidence" value="ECO:0007669"/>
    <property type="project" value="UniProtKB-UniRule"/>
</dbReference>
<dbReference type="GO" id="GO:0004845">
    <property type="term" value="F:uracil phosphoribosyltransferase activity"/>
    <property type="evidence" value="ECO:0007669"/>
    <property type="project" value="UniProtKB-UniRule"/>
</dbReference>
<dbReference type="GO" id="GO:0044206">
    <property type="term" value="P:UMP salvage"/>
    <property type="evidence" value="ECO:0007669"/>
    <property type="project" value="UniProtKB-UniRule"/>
</dbReference>
<dbReference type="GO" id="GO:0006223">
    <property type="term" value="P:uracil salvage"/>
    <property type="evidence" value="ECO:0007669"/>
    <property type="project" value="InterPro"/>
</dbReference>
<dbReference type="CDD" id="cd06223">
    <property type="entry name" value="PRTases_typeI"/>
    <property type="match status" value="1"/>
</dbReference>
<dbReference type="FunFam" id="3.40.50.2020:FF:000003">
    <property type="entry name" value="Uracil phosphoribosyltransferase"/>
    <property type="match status" value="1"/>
</dbReference>
<dbReference type="Gene3D" id="3.40.50.2020">
    <property type="match status" value="1"/>
</dbReference>
<dbReference type="HAMAP" id="MF_01218_B">
    <property type="entry name" value="Upp_B"/>
    <property type="match status" value="1"/>
</dbReference>
<dbReference type="InterPro" id="IPR000836">
    <property type="entry name" value="PRibTrfase_dom"/>
</dbReference>
<dbReference type="InterPro" id="IPR029057">
    <property type="entry name" value="PRTase-like"/>
</dbReference>
<dbReference type="InterPro" id="IPR034332">
    <property type="entry name" value="Upp_B"/>
</dbReference>
<dbReference type="InterPro" id="IPR050054">
    <property type="entry name" value="UPRTase/APRTase"/>
</dbReference>
<dbReference type="InterPro" id="IPR005765">
    <property type="entry name" value="Ura_phspho_trans"/>
</dbReference>
<dbReference type="NCBIfam" id="NF001097">
    <property type="entry name" value="PRK00129.1"/>
    <property type="match status" value="1"/>
</dbReference>
<dbReference type="NCBIfam" id="TIGR01091">
    <property type="entry name" value="upp"/>
    <property type="match status" value="1"/>
</dbReference>
<dbReference type="PANTHER" id="PTHR32315">
    <property type="entry name" value="ADENINE PHOSPHORIBOSYLTRANSFERASE"/>
    <property type="match status" value="1"/>
</dbReference>
<dbReference type="PANTHER" id="PTHR32315:SF4">
    <property type="entry name" value="URACIL PHOSPHORIBOSYLTRANSFERASE, CHLOROPLASTIC"/>
    <property type="match status" value="1"/>
</dbReference>
<dbReference type="Pfam" id="PF14681">
    <property type="entry name" value="UPRTase"/>
    <property type="match status" value="1"/>
</dbReference>
<dbReference type="SUPFAM" id="SSF53271">
    <property type="entry name" value="PRTase-like"/>
    <property type="match status" value="1"/>
</dbReference>
<evidence type="ECO:0000255" key="1">
    <source>
        <dbReference type="HAMAP-Rule" id="MF_01218"/>
    </source>
</evidence>
<comment type="function">
    <text evidence="1">Catalyzes the conversion of uracil and 5-phospho-alpha-D-ribose 1-diphosphate (PRPP) to UMP and diphosphate.</text>
</comment>
<comment type="catalytic activity">
    <reaction evidence="1">
        <text>UMP + diphosphate = 5-phospho-alpha-D-ribose 1-diphosphate + uracil</text>
        <dbReference type="Rhea" id="RHEA:13017"/>
        <dbReference type="ChEBI" id="CHEBI:17568"/>
        <dbReference type="ChEBI" id="CHEBI:33019"/>
        <dbReference type="ChEBI" id="CHEBI:57865"/>
        <dbReference type="ChEBI" id="CHEBI:58017"/>
        <dbReference type="EC" id="2.4.2.9"/>
    </reaction>
</comment>
<comment type="cofactor">
    <cofactor evidence="1">
        <name>Mg(2+)</name>
        <dbReference type="ChEBI" id="CHEBI:18420"/>
    </cofactor>
    <text evidence="1">Binds 1 Mg(2+) ion per subunit. The magnesium is bound as Mg-PRPP.</text>
</comment>
<comment type="activity regulation">
    <text evidence="1">Allosterically activated by GTP.</text>
</comment>
<comment type="pathway">
    <text evidence="1">Pyrimidine metabolism; UMP biosynthesis via salvage pathway; UMP from uracil: step 1/1.</text>
</comment>
<comment type="similarity">
    <text evidence="1">Belongs to the UPRTase family.</text>
</comment>
<feature type="chain" id="PRO_1000053686" description="Uracil phosphoribosyltransferase">
    <location>
        <begin position="1"/>
        <end position="216"/>
    </location>
</feature>
<feature type="binding site" evidence="1">
    <location>
        <position position="85"/>
    </location>
    <ligand>
        <name>5-phospho-alpha-D-ribose 1-diphosphate</name>
        <dbReference type="ChEBI" id="CHEBI:58017"/>
    </ligand>
</feature>
<feature type="binding site" evidence="1">
    <location>
        <position position="110"/>
    </location>
    <ligand>
        <name>5-phospho-alpha-D-ribose 1-diphosphate</name>
        <dbReference type="ChEBI" id="CHEBI:58017"/>
    </ligand>
</feature>
<feature type="binding site" evidence="1">
    <location>
        <begin position="135"/>
        <end position="143"/>
    </location>
    <ligand>
        <name>5-phospho-alpha-D-ribose 1-diphosphate</name>
        <dbReference type="ChEBI" id="CHEBI:58017"/>
    </ligand>
</feature>
<feature type="binding site" evidence="1">
    <location>
        <position position="200"/>
    </location>
    <ligand>
        <name>uracil</name>
        <dbReference type="ChEBI" id="CHEBI:17568"/>
    </ligand>
</feature>
<feature type="binding site" evidence="1">
    <location>
        <begin position="205"/>
        <end position="207"/>
    </location>
    <ligand>
        <name>uracil</name>
        <dbReference type="ChEBI" id="CHEBI:17568"/>
    </ligand>
</feature>
<feature type="binding site" evidence="1">
    <location>
        <position position="206"/>
    </location>
    <ligand>
        <name>5-phospho-alpha-D-ribose 1-diphosphate</name>
        <dbReference type="ChEBI" id="CHEBI:58017"/>
    </ligand>
</feature>
<keyword id="KW-0021">Allosteric enzyme</keyword>
<keyword id="KW-0328">Glycosyltransferase</keyword>
<keyword id="KW-0342">GTP-binding</keyword>
<keyword id="KW-0460">Magnesium</keyword>
<keyword id="KW-0547">Nucleotide-binding</keyword>
<keyword id="KW-0808">Transferase</keyword>